<comment type="function">
    <text evidence="1">Removes the formyl group from the N-terminal Met of newly synthesized proteins. Requires at least a dipeptide for an efficient rate of reaction. N-terminal L-methionine is a prerequisite for activity but the enzyme has broad specificity at other positions.</text>
</comment>
<comment type="catalytic activity">
    <reaction evidence="1">
        <text>N-terminal N-formyl-L-methionyl-[peptide] + H2O = N-terminal L-methionyl-[peptide] + formate</text>
        <dbReference type="Rhea" id="RHEA:24420"/>
        <dbReference type="Rhea" id="RHEA-COMP:10639"/>
        <dbReference type="Rhea" id="RHEA-COMP:10640"/>
        <dbReference type="ChEBI" id="CHEBI:15377"/>
        <dbReference type="ChEBI" id="CHEBI:15740"/>
        <dbReference type="ChEBI" id="CHEBI:49298"/>
        <dbReference type="ChEBI" id="CHEBI:64731"/>
        <dbReference type="EC" id="3.5.1.88"/>
    </reaction>
</comment>
<comment type="cofactor">
    <cofactor evidence="1">
        <name>Fe(2+)</name>
        <dbReference type="ChEBI" id="CHEBI:29033"/>
    </cofactor>
    <text evidence="1">Binds 1 Fe(2+) ion.</text>
</comment>
<comment type="similarity">
    <text evidence="1">Belongs to the polypeptide deformylase family.</text>
</comment>
<sequence>MTATILVEKQKVDRPPLELHYLGDKVLRQPAKRIAKVDDSIRKLAKEMLQTMYSANGIGLAAPQVGINKQLLVVDCEQDKPDEPPLIMINPQITRTSEELCVVEEGCLSVPNVYMDVTRPRAIEVTYKDEHGRPQKRLFAELTARVIQHEMDHLNGVMFVDRVDNPLALAESLKKEGFSMQAVKPVA</sequence>
<name>DEF_SYNY3</name>
<organism>
    <name type="scientific">Synechocystis sp. (strain ATCC 27184 / PCC 6803 / Kazusa)</name>
    <dbReference type="NCBI Taxonomy" id="1111708"/>
    <lineage>
        <taxon>Bacteria</taxon>
        <taxon>Bacillati</taxon>
        <taxon>Cyanobacteriota</taxon>
        <taxon>Cyanophyceae</taxon>
        <taxon>Synechococcales</taxon>
        <taxon>Merismopediaceae</taxon>
        <taxon>Synechocystis</taxon>
    </lineage>
</organism>
<keyword id="KW-0378">Hydrolase</keyword>
<keyword id="KW-0408">Iron</keyword>
<keyword id="KW-0479">Metal-binding</keyword>
<keyword id="KW-0648">Protein biosynthesis</keyword>
<keyword id="KW-1185">Reference proteome</keyword>
<gene>
    <name evidence="1" type="primary">def</name>
    <name type="ordered locus">slr1549</name>
</gene>
<feature type="chain" id="PRO_0000082865" description="Peptide deformylase">
    <location>
        <begin position="1"/>
        <end position="187"/>
    </location>
</feature>
<feature type="active site" evidence="1">
    <location>
        <position position="150"/>
    </location>
</feature>
<feature type="binding site" evidence="1">
    <location>
        <position position="107"/>
    </location>
    <ligand>
        <name>Fe cation</name>
        <dbReference type="ChEBI" id="CHEBI:24875"/>
    </ligand>
</feature>
<feature type="binding site" evidence="1">
    <location>
        <position position="149"/>
    </location>
    <ligand>
        <name>Fe cation</name>
        <dbReference type="ChEBI" id="CHEBI:24875"/>
    </ligand>
</feature>
<feature type="binding site" evidence="1">
    <location>
        <position position="153"/>
    </location>
    <ligand>
        <name>Fe cation</name>
        <dbReference type="ChEBI" id="CHEBI:24875"/>
    </ligand>
</feature>
<protein>
    <recommendedName>
        <fullName evidence="1">Peptide deformylase</fullName>
        <shortName evidence="1">PDF</shortName>
        <ecNumber evidence="1">3.5.1.88</ecNumber>
    </recommendedName>
    <alternativeName>
        <fullName evidence="1">Polypeptide deformylase</fullName>
    </alternativeName>
</protein>
<reference key="1">
    <citation type="journal article" date="1996" name="DNA Res.">
        <title>Sequence analysis of the genome of the unicellular cyanobacterium Synechocystis sp. strain PCC6803. II. Sequence determination of the entire genome and assignment of potential protein-coding regions.</title>
        <authorList>
            <person name="Kaneko T."/>
            <person name="Sato S."/>
            <person name="Kotani H."/>
            <person name="Tanaka A."/>
            <person name="Asamizu E."/>
            <person name="Nakamura Y."/>
            <person name="Miyajima N."/>
            <person name="Hirosawa M."/>
            <person name="Sugiura M."/>
            <person name="Sasamoto S."/>
            <person name="Kimura T."/>
            <person name="Hosouchi T."/>
            <person name="Matsuno A."/>
            <person name="Muraki A."/>
            <person name="Nakazaki N."/>
            <person name="Naruo K."/>
            <person name="Okumura S."/>
            <person name="Shimpo S."/>
            <person name="Takeuchi C."/>
            <person name="Wada T."/>
            <person name="Watanabe A."/>
            <person name="Yamada M."/>
            <person name="Yasuda M."/>
            <person name="Tabata S."/>
        </authorList>
    </citation>
    <scope>NUCLEOTIDE SEQUENCE [LARGE SCALE GENOMIC DNA]</scope>
    <source>
        <strain>ATCC 27184 / PCC 6803 / Kazusa</strain>
    </source>
</reference>
<dbReference type="EC" id="3.5.1.88" evidence="1"/>
<dbReference type="EMBL" id="BA000022">
    <property type="protein sequence ID" value="BAA17481.1"/>
    <property type="molecule type" value="Genomic_DNA"/>
</dbReference>
<dbReference type="PIR" id="S77378">
    <property type="entry name" value="S77378"/>
</dbReference>
<dbReference type="SMR" id="P73441"/>
<dbReference type="FunCoup" id="P73441">
    <property type="interactions" value="419"/>
</dbReference>
<dbReference type="IntAct" id="P73441">
    <property type="interactions" value="2"/>
</dbReference>
<dbReference type="STRING" id="1148.gene:10498346"/>
<dbReference type="PaxDb" id="1148-1652560"/>
<dbReference type="EnsemblBacteria" id="BAA17481">
    <property type="protein sequence ID" value="BAA17481"/>
    <property type="gene ID" value="BAA17481"/>
</dbReference>
<dbReference type="KEGG" id="syn:slr1549"/>
<dbReference type="eggNOG" id="COG0242">
    <property type="taxonomic scope" value="Bacteria"/>
</dbReference>
<dbReference type="InParanoid" id="P73441"/>
<dbReference type="PhylomeDB" id="P73441"/>
<dbReference type="Proteomes" id="UP000001425">
    <property type="component" value="Chromosome"/>
</dbReference>
<dbReference type="GO" id="GO:0046872">
    <property type="term" value="F:metal ion binding"/>
    <property type="evidence" value="ECO:0007669"/>
    <property type="project" value="UniProtKB-KW"/>
</dbReference>
<dbReference type="GO" id="GO:0042586">
    <property type="term" value="F:peptide deformylase activity"/>
    <property type="evidence" value="ECO:0000318"/>
    <property type="project" value="GO_Central"/>
</dbReference>
<dbReference type="GO" id="GO:0043686">
    <property type="term" value="P:co-translational protein modification"/>
    <property type="evidence" value="ECO:0000318"/>
    <property type="project" value="GO_Central"/>
</dbReference>
<dbReference type="GO" id="GO:0006412">
    <property type="term" value="P:translation"/>
    <property type="evidence" value="ECO:0007669"/>
    <property type="project" value="UniProtKB-UniRule"/>
</dbReference>
<dbReference type="CDD" id="cd00487">
    <property type="entry name" value="Pep_deformylase"/>
    <property type="match status" value="1"/>
</dbReference>
<dbReference type="FunFam" id="3.90.45.10:FF:000005">
    <property type="entry name" value="Peptide deformylase"/>
    <property type="match status" value="1"/>
</dbReference>
<dbReference type="Gene3D" id="3.90.45.10">
    <property type="entry name" value="Peptide deformylase"/>
    <property type="match status" value="1"/>
</dbReference>
<dbReference type="HAMAP" id="MF_00163">
    <property type="entry name" value="Pep_deformylase"/>
    <property type="match status" value="1"/>
</dbReference>
<dbReference type="InterPro" id="IPR023635">
    <property type="entry name" value="Peptide_deformylase"/>
</dbReference>
<dbReference type="InterPro" id="IPR036821">
    <property type="entry name" value="Peptide_deformylase_sf"/>
</dbReference>
<dbReference type="NCBIfam" id="TIGR00079">
    <property type="entry name" value="pept_deformyl"/>
    <property type="match status" value="1"/>
</dbReference>
<dbReference type="NCBIfam" id="NF001159">
    <property type="entry name" value="PRK00150.1-3"/>
    <property type="match status" value="1"/>
</dbReference>
<dbReference type="PANTHER" id="PTHR10458">
    <property type="entry name" value="PEPTIDE DEFORMYLASE"/>
    <property type="match status" value="1"/>
</dbReference>
<dbReference type="PANTHER" id="PTHR10458:SF22">
    <property type="entry name" value="PEPTIDE DEFORMYLASE"/>
    <property type="match status" value="1"/>
</dbReference>
<dbReference type="Pfam" id="PF01327">
    <property type="entry name" value="Pep_deformylase"/>
    <property type="match status" value="1"/>
</dbReference>
<dbReference type="PIRSF" id="PIRSF004749">
    <property type="entry name" value="Pep_def"/>
    <property type="match status" value="1"/>
</dbReference>
<dbReference type="PRINTS" id="PR01576">
    <property type="entry name" value="PDEFORMYLASE"/>
</dbReference>
<dbReference type="SUPFAM" id="SSF56420">
    <property type="entry name" value="Peptide deformylase"/>
    <property type="match status" value="1"/>
</dbReference>
<proteinExistence type="inferred from homology"/>
<accession>P73441</accession>
<evidence type="ECO:0000255" key="1">
    <source>
        <dbReference type="HAMAP-Rule" id="MF_00163"/>
    </source>
</evidence>